<reference key="1">
    <citation type="journal article" date="1996" name="Nature">
        <title>A mammalian RNA editing enzyme.</title>
        <authorList>
            <person name="Melcher T."/>
            <person name="Maas S."/>
            <person name="Herb A."/>
            <person name="Sprengel R."/>
            <person name="Seeburg P.H."/>
            <person name="Higuchi M."/>
        </authorList>
    </citation>
    <scope>NUCLEOTIDE SEQUENCE [MRNA]</scope>
</reference>
<reference key="2">
    <citation type="journal article" date="2010" name="FASEB J.">
        <title>Deficiency in RNA editing enzyme ADAR2 impairs regulated exocytosis.</title>
        <authorList>
            <person name="Yang L."/>
            <person name="Zhao L."/>
            <person name="Gan Z."/>
            <person name="He Z."/>
            <person name="Xu J."/>
            <person name="Gao X."/>
            <person name="Wang X."/>
            <person name="Han W."/>
            <person name="Chen L."/>
            <person name="Xu T."/>
            <person name="Li W."/>
            <person name="Liu Y."/>
        </authorList>
    </citation>
    <scope>FUNCTION</scope>
</reference>
<reference key="3">
    <citation type="journal article" date="2006" name="Structure">
        <title>Structure and specific RNA binding of ADAR2 double-stranded RNA binding motifs.</title>
        <authorList>
            <person name="Stefl R."/>
            <person name="Xu M."/>
            <person name="Skrisovska L."/>
            <person name="Emeson R.B."/>
            <person name="Allain F.H."/>
        </authorList>
    </citation>
    <scope>STRUCTURE BY NMR OF 74-301</scope>
    <scope>FUNCTION</scope>
    <scope>MUTAGENESIS OF LYS-128 AND LYS-281</scope>
    <scope>RNA-BINDING</scope>
</reference>
<reference key="4">
    <citation type="journal article" date="2010" name="Cell">
        <title>The solution structure of the ADAR2 dsRBM-RNA complex reveals a sequence-specific readout of the minor groove.</title>
        <authorList>
            <person name="Stefl R."/>
            <person name="Oberstrass F.C."/>
            <person name="Hood J.L."/>
            <person name="Jourdan M."/>
            <person name="Zimmermann M."/>
            <person name="Skrisovska L."/>
            <person name="Maris C."/>
            <person name="Peng L."/>
            <person name="Hofr C."/>
            <person name="Emeson R.B."/>
            <person name="Allain F.H."/>
        </authorList>
    </citation>
    <scope>STRUCTURE BY NMR OF 74-301 IN COMPLEX WITH RNA</scope>
    <scope>FUNCTION</scope>
    <scope>MUTAGENESIS OF MET-84; 104-VAL-HIS-105; MET-238 AND 258-SER-HIS-259</scope>
</reference>
<protein>
    <recommendedName>
        <fullName>Double-stranded RNA-specific editase 1</fullName>
        <ecNumber>3.5.4.37</ecNumber>
    </recommendedName>
    <alternativeName>
        <fullName>RNA-editing deaminase 1</fullName>
    </alternativeName>
    <alternativeName>
        <fullName>RNA-editing enzyme 1</fullName>
    </alternativeName>
    <alternativeName>
        <fullName>dsRNA adenosine deaminase</fullName>
    </alternativeName>
</protein>
<dbReference type="EC" id="3.5.4.37"/>
<dbReference type="EMBL" id="U43534">
    <property type="protein sequence ID" value="AAA96755.1"/>
    <property type="molecule type" value="mRNA"/>
</dbReference>
<dbReference type="PIR" id="S68443">
    <property type="entry name" value="S68443"/>
</dbReference>
<dbReference type="RefSeq" id="NP_001104525.1">
    <property type="nucleotide sequence ID" value="NM_001111055.1"/>
</dbReference>
<dbReference type="RefSeq" id="NP_001104526.1">
    <property type="nucleotide sequence ID" value="NM_001111056.1"/>
</dbReference>
<dbReference type="RefSeq" id="NP_001104527.1">
    <property type="nucleotide sequence ID" value="NM_001111057.1"/>
</dbReference>
<dbReference type="RefSeq" id="NP_037026.2">
    <property type="nucleotide sequence ID" value="NM_012894.2"/>
</dbReference>
<dbReference type="PDB" id="2B7T">
    <property type="method" value="NMR"/>
    <property type="chains" value="A=74-146"/>
</dbReference>
<dbReference type="PDB" id="2B7V">
    <property type="method" value="NMR"/>
    <property type="chains" value="A=231-301"/>
</dbReference>
<dbReference type="PDB" id="2L3C">
    <property type="method" value="NMR"/>
    <property type="chains" value="A=74-147"/>
</dbReference>
<dbReference type="PDB" id="2L3J">
    <property type="method" value="NMR"/>
    <property type="chains" value="A=74-301"/>
</dbReference>
<dbReference type="PDBsum" id="2B7T"/>
<dbReference type="PDBsum" id="2B7V"/>
<dbReference type="PDBsum" id="2L3C"/>
<dbReference type="PDBsum" id="2L3J"/>
<dbReference type="BMRB" id="P51400"/>
<dbReference type="SMR" id="P51400"/>
<dbReference type="FunCoup" id="P51400">
    <property type="interactions" value="2375"/>
</dbReference>
<dbReference type="STRING" id="10116.ENSRNOP00000069261"/>
<dbReference type="GlyGen" id="P51400">
    <property type="glycosylation" value="1 site"/>
</dbReference>
<dbReference type="PhosphoSitePlus" id="P51400"/>
<dbReference type="PaxDb" id="10116-ENSRNOP00000001642"/>
<dbReference type="GeneID" id="25367"/>
<dbReference type="KEGG" id="rno:25367"/>
<dbReference type="UCSC" id="RGD:2033">
    <property type="organism name" value="rat"/>
</dbReference>
<dbReference type="AGR" id="RGD:2033"/>
<dbReference type="CTD" id="104"/>
<dbReference type="RGD" id="2033">
    <property type="gene designation" value="Adarb1"/>
</dbReference>
<dbReference type="eggNOG" id="KOG2777">
    <property type="taxonomic scope" value="Eukaryota"/>
</dbReference>
<dbReference type="InParanoid" id="P51400"/>
<dbReference type="OrthoDB" id="10268011at2759"/>
<dbReference type="PhylomeDB" id="P51400"/>
<dbReference type="Reactome" id="R-RNO-75102">
    <property type="pathway name" value="C6 deamination of adenosine"/>
</dbReference>
<dbReference type="Reactome" id="R-RNO-77042">
    <property type="pathway name" value="Formation of editosomes by ADAR proteins"/>
</dbReference>
<dbReference type="EvolutionaryTrace" id="P51400"/>
<dbReference type="PRO" id="PR:P51400"/>
<dbReference type="Proteomes" id="UP000002494">
    <property type="component" value="Unplaced"/>
</dbReference>
<dbReference type="GO" id="GO:0005737">
    <property type="term" value="C:cytoplasm"/>
    <property type="evidence" value="ECO:0000318"/>
    <property type="project" value="GO_Central"/>
</dbReference>
<dbReference type="GO" id="GO:0005730">
    <property type="term" value="C:nucleolus"/>
    <property type="evidence" value="ECO:0000266"/>
    <property type="project" value="RGD"/>
</dbReference>
<dbReference type="GO" id="GO:0005654">
    <property type="term" value="C:nucleoplasm"/>
    <property type="evidence" value="ECO:0000314"/>
    <property type="project" value="RGD"/>
</dbReference>
<dbReference type="GO" id="GO:0005634">
    <property type="term" value="C:nucleus"/>
    <property type="evidence" value="ECO:0000266"/>
    <property type="project" value="RGD"/>
</dbReference>
<dbReference type="GO" id="GO:0045202">
    <property type="term" value="C:synapse"/>
    <property type="evidence" value="ECO:0007669"/>
    <property type="project" value="GOC"/>
</dbReference>
<dbReference type="GO" id="GO:0003726">
    <property type="term" value="F:double-stranded RNA adenosine deaminase activity"/>
    <property type="evidence" value="ECO:0000314"/>
    <property type="project" value="RGD"/>
</dbReference>
<dbReference type="GO" id="GO:0003725">
    <property type="term" value="F:double-stranded RNA binding"/>
    <property type="evidence" value="ECO:0000314"/>
    <property type="project" value="RGD"/>
</dbReference>
<dbReference type="GO" id="GO:0042802">
    <property type="term" value="F:identical protein binding"/>
    <property type="evidence" value="ECO:0000353"/>
    <property type="project" value="RGD"/>
</dbReference>
<dbReference type="GO" id="GO:0046872">
    <property type="term" value="F:metal ion binding"/>
    <property type="evidence" value="ECO:0007669"/>
    <property type="project" value="UniProtKB-KW"/>
</dbReference>
<dbReference type="GO" id="GO:0003723">
    <property type="term" value="F:RNA binding"/>
    <property type="evidence" value="ECO:0000314"/>
    <property type="project" value="RGD"/>
</dbReference>
<dbReference type="GO" id="GO:0008251">
    <property type="term" value="F:tRNA-specific adenosine deaminase activity"/>
    <property type="evidence" value="ECO:0000318"/>
    <property type="project" value="GO_Central"/>
</dbReference>
<dbReference type="GO" id="GO:0006382">
    <property type="term" value="P:adenosine to inosine editing"/>
    <property type="evidence" value="ECO:0000314"/>
    <property type="project" value="RGD"/>
</dbReference>
<dbReference type="GO" id="GO:0016553">
    <property type="term" value="P:base conversion or substitution editing"/>
    <property type="evidence" value="ECO:0000314"/>
    <property type="project" value="RGD"/>
</dbReference>
<dbReference type="GO" id="GO:0021610">
    <property type="term" value="P:facial nerve morphogenesis"/>
    <property type="evidence" value="ECO:0000266"/>
    <property type="project" value="RGD"/>
</dbReference>
<dbReference type="GO" id="GO:0021618">
    <property type="term" value="P:hypoglossal nerve morphogenesis"/>
    <property type="evidence" value="ECO:0000266"/>
    <property type="project" value="RGD"/>
</dbReference>
<dbReference type="GO" id="GO:0060384">
    <property type="term" value="P:innervation"/>
    <property type="evidence" value="ECO:0000266"/>
    <property type="project" value="RGD"/>
</dbReference>
<dbReference type="GO" id="GO:0061744">
    <property type="term" value="P:motor behavior"/>
    <property type="evidence" value="ECO:0000266"/>
    <property type="project" value="RGD"/>
</dbReference>
<dbReference type="GO" id="GO:0097049">
    <property type="term" value="P:motor neuron apoptotic process"/>
    <property type="evidence" value="ECO:0000266"/>
    <property type="project" value="RGD"/>
</dbReference>
<dbReference type="GO" id="GO:0016556">
    <property type="term" value="P:mRNA modification"/>
    <property type="evidence" value="ECO:0000314"/>
    <property type="project" value="RGD"/>
</dbReference>
<dbReference type="GO" id="GO:0006397">
    <property type="term" value="P:mRNA processing"/>
    <property type="evidence" value="ECO:0007669"/>
    <property type="project" value="UniProtKB-KW"/>
</dbReference>
<dbReference type="GO" id="GO:0035264">
    <property type="term" value="P:multicellular organism growth"/>
    <property type="evidence" value="ECO:0000266"/>
    <property type="project" value="RGD"/>
</dbReference>
<dbReference type="GO" id="GO:0060415">
    <property type="term" value="P:muscle tissue morphogenesis"/>
    <property type="evidence" value="ECO:0000266"/>
    <property type="project" value="RGD"/>
</dbReference>
<dbReference type="GO" id="GO:0030336">
    <property type="term" value="P:negative regulation of cell migration"/>
    <property type="evidence" value="ECO:0000250"/>
    <property type="project" value="UniProtKB"/>
</dbReference>
<dbReference type="GO" id="GO:0008285">
    <property type="term" value="P:negative regulation of cell population proliferation"/>
    <property type="evidence" value="ECO:0000250"/>
    <property type="project" value="UniProtKB"/>
</dbReference>
<dbReference type="GO" id="GO:0044387">
    <property type="term" value="P:negative regulation of protein kinase activity by regulation of protein phosphorylation"/>
    <property type="evidence" value="ECO:0000250"/>
    <property type="project" value="UniProtKB"/>
</dbReference>
<dbReference type="GO" id="GO:0050884">
    <property type="term" value="P:neuromuscular process controlling posture"/>
    <property type="evidence" value="ECO:0000266"/>
    <property type="project" value="RGD"/>
</dbReference>
<dbReference type="GO" id="GO:0007274">
    <property type="term" value="P:neuromuscular synaptic transmission"/>
    <property type="evidence" value="ECO:0000266"/>
    <property type="project" value="RGD"/>
</dbReference>
<dbReference type="GO" id="GO:0050685">
    <property type="term" value="P:positive regulation of mRNA processing"/>
    <property type="evidence" value="ECO:0000314"/>
    <property type="project" value="RGD"/>
</dbReference>
<dbReference type="GO" id="GO:0045070">
    <property type="term" value="P:positive regulation of viral genome replication"/>
    <property type="evidence" value="ECO:0000250"/>
    <property type="project" value="UniProtKB"/>
</dbReference>
<dbReference type="GO" id="GO:0051726">
    <property type="term" value="P:regulation of cell cycle"/>
    <property type="evidence" value="ECO:0000250"/>
    <property type="project" value="UniProtKB"/>
</dbReference>
<dbReference type="GO" id="GO:0006396">
    <property type="term" value="P:RNA processing"/>
    <property type="evidence" value="ECO:0000250"/>
    <property type="project" value="HGNC-UCL"/>
</dbReference>
<dbReference type="GO" id="GO:0021965">
    <property type="term" value="P:spinal cord ventral commissure morphogenesis"/>
    <property type="evidence" value="ECO:0000266"/>
    <property type="project" value="RGD"/>
</dbReference>
<dbReference type="CDD" id="cd19895">
    <property type="entry name" value="DSRM_RED1_rpt1"/>
    <property type="match status" value="1"/>
</dbReference>
<dbReference type="CDD" id="cd19898">
    <property type="entry name" value="DSRM_RED1_rpt2"/>
    <property type="match status" value="1"/>
</dbReference>
<dbReference type="DisProt" id="DP03065"/>
<dbReference type="FunFam" id="3.30.160.20:FF:000009">
    <property type="entry name" value="Adenosine deaminase RNA-specific B2 (inactive)"/>
    <property type="match status" value="1"/>
</dbReference>
<dbReference type="FunFam" id="3.30.160.20:FF:000011">
    <property type="entry name" value="double-stranded RNA-specific editase 1 isoform X1"/>
    <property type="match status" value="1"/>
</dbReference>
<dbReference type="Gene3D" id="3.30.160.20">
    <property type="match status" value="2"/>
</dbReference>
<dbReference type="InterPro" id="IPR002466">
    <property type="entry name" value="A_deamin"/>
</dbReference>
<dbReference type="InterPro" id="IPR044458">
    <property type="entry name" value="ADAR2_DSRM_1"/>
</dbReference>
<dbReference type="InterPro" id="IPR044459">
    <property type="entry name" value="ADAR2_DSRM_2"/>
</dbReference>
<dbReference type="InterPro" id="IPR014720">
    <property type="entry name" value="dsRBD_dom"/>
</dbReference>
<dbReference type="PANTHER" id="PTHR10910:SF58">
    <property type="entry name" value="DOUBLE-STRANDED RNA-SPECIFIC EDITASE 1"/>
    <property type="match status" value="1"/>
</dbReference>
<dbReference type="PANTHER" id="PTHR10910">
    <property type="entry name" value="EUKARYOTE SPECIFIC DSRNA BINDING PROTEIN"/>
    <property type="match status" value="1"/>
</dbReference>
<dbReference type="Pfam" id="PF02137">
    <property type="entry name" value="A_deamin"/>
    <property type="match status" value="1"/>
</dbReference>
<dbReference type="Pfam" id="PF00035">
    <property type="entry name" value="dsrm"/>
    <property type="match status" value="2"/>
</dbReference>
<dbReference type="SMART" id="SM00552">
    <property type="entry name" value="ADEAMc"/>
    <property type="match status" value="1"/>
</dbReference>
<dbReference type="SMART" id="SM00358">
    <property type="entry name" value="DSRM"/>
    <property type="match status" value="2"/>
</dbReference>
<dbReference type="SUPFAM" id="SSF54768">
    <property type="entry name" value="dsRNA-binding domain-like"/>
    <property type="match status" value="2"/>
</dbReference>
<dbReference type="PROSITE" id="PS50141">
    <property type="entry name" value="A_DEAMIN_EDITASE"/>
    <property type="match status" value="1"/>
</dbReference>
<dbReference type="PROSITE" id="PS50137">
    <property type="entry name" value="DS_RBD"/>
    <property type="match status" value="2"/>
</dbReference>
<sequence length="711" mass="77925">MDIEDEENMSSSSIDVKENRNLDNMPPKDSSTPGPGEGIPLSNGGGGSTSRKRPLEEGSNGHSKYRLKKRRKTPGPVLPKNALMQLNEIKPGLQYMLLSQTGPVHAPLFVMSVEVNGQVFEGSGPTKKKAKLHAAEKALRSFVQFPNASEAHLAMGRTLSVNTDFTSDQADFPDTLFNGFETPDKSEPPFYVGSNGDDSFSSSGDVSLSASPVPASLTQPPLPIPPPFPPPSGKNPVMILNELRPGLKYDFLSESGESHAKSFVMSVVVDGQFFEGSGRNKKLAKARAAQSALATVFNLHLDQTPSRQPVLSEGLQLHLPQVLADAVSRLVLGKFSDLTDNFSSPHARRKVLSGVVMTTGTDVKDAKVISVSTGTKCINGEYMSDRGLALNDCHAEIISRRSLLRFLYAQLELYLNNKEDQKKSIFQKSERGGFRLKDTVQFHLYISTSPCGDARIFSPHEPVLEGMAPDSHQLTEPADRHPNRKARGQLRTKIESGEGTIPVRSNASIQTWDGVLQGERLLTMSCSDKIARWNVVGIQGALLSIFVEPIYFSSIILGSLYHGDHLSRAMYQRISNIEDLPPLYTLNKPLLSGISNAEARQPGKAPNFSVNWTVGDTAIEVINATTGKDELGRPSRLCKHALYCRWMRVHGKVPPHLLRTKITKPTTYHESKLAAKEYQAAKARLFTAFIKAGLGAWVEKPTEQDQFSFTP</sequence>
<proteinExistence type="evidence at protein level"/>
<name>RED1_RAT</name>
<organism>
    <name type="scientific">Rattus norvegicus</name>
    <name type="common">Rat</name>
    <dbReference type="NCBI Taxonomy" id="10116"/>
    <lineage>
        <taxon>Eukaryota</taxon>
        <taxon>Metazoa</taxon>
        <taxon>Chordata</taxon>
        <taxon>Craniata</taxon>
        <taxon>Vertebrata</taxon>
        <taxon>Euteleostomi</taxon>
        <taxon>Mammalia</taxon>
        <taxon>Eutheria</taxon>
        <taxon>Euarchontoglires</taxon>
        <taxon>Glires</taxon>
        <taxon>Rodentia</taxon>
        <taxon>Myomorpha</taxon>
        <taxon>Muroidea</taxon>
        <taxon>Muridae</taxon>
        <taxon>Murinae</taxon>
        <taxon>Rattus</taxon>
    </lineage>
</organism>
<gene>
    <name type="primary">Adarb1</name>
    <name type="synonym">Red1</name>
</gene>
<evidence type="ECO:0000250" key="1"/>
<evidence type="ECO:0000250" key="2">
    <source>
        <dbReference type="UniProtKB" id="P78563"/>
    </source>
</evidence>
<evidence type="ECO:0000255" key="3">
    <source>
        <dbReference type="PROSITE-ProRule" id="PRU00240"/>
    </source>
</evidence>
<evidence type="ECO:0000255" key="4">
    <source>
        <dbReference type="PROSITE-ProRule" id="PRU00266"/>
    </source>
</evidence>
<evidence type="ECO:0000256" key="5">
    <source>
        <dbReference type="SAM" id="MobiDB-lite"/>
    </source>
</evidence>
<evidence type="ECO:0000269" key="6">
    <source>
    </source>
</evidence>
<evidence type="ECO:0000269" key="7">
    <source>
    </source>
</evidence>
<evidence type="ECO:0000269" key="8">
    <source>
    </source>
</evidence>
<evidence type="ECO:0007829" key="9">
    <source>
        <dbReference type="PDB" id="2B7T"/>
    </source>
</evidence>
<evidence type="ECO:0007829" key="10">
    <source>
        <dbReference type="PDB" id="2B7V"/>
    </source>
</evidence>
<evidence type="ECO:0007829" key="11">
    <source>
        <dbReference type="PDB" id="2L3J"/>
    </source>
</evidence>
<accession>P51400</accession>
<comment type="function">
    <text evidence="1 6 7 8">Catalyzes the hydrolytic deamination of adenosine to inosine in double-stranded RNA (dsRNA) referred to as A-to-I RNA editing. This may affect gene expression and function in a number of ways that include mRNA translation by changing codons and hence the amino acid sequence of proteins; pre-mRNA splicing by altering splice site recognition sequences; RNA stability by changing sequences involved in nuclease recognition; genetic stability in the case of RNA virus genomes by changing sequences during viral RNA replication; and RNA structure-dependent activities such as microRNA production or targeting or protein-RNA interactions. Can edit both viral and cellular RNAs and can edit RNAs at multiple sites (hyper-editing) or at specific sites (site-specific editing). Its cellular RNA substrates include: bladder cancer-associated protein (BLCAP), neurotransmitter receptors for glutamate (GRIA2 and GRIK2) and serotonin (HTR2C), GABA receptor (GABRA3) and potassium voltage-gated channel (KCNA1). Site-specific RNA editing of transcripts encoding these proteins results in amino acid substitutions which consequently alter their functional activities. Edits GRIA2 at both the Q/R and R/G sites efficiently but converts the adenosine in hotspot1 much less efficiently (By similarity). Can inhibit cell proliferation and migration and can stimulate exocytosis.</text>
</comment>
<comment type="catalytic activity">
    <reaction>
        <text>adenosine in double-stranded RNA + H2O + H(+) = inosine in double-stranded RNA + NH4(+)</text>
        <dbReference type="Rhea" id="RHEA:10120"/>
        <dbReference type="Rhea" id="RHEA-COMP:13885"/>
        <dbReference type="Rhea" id="RHEA-COMP:13886"/>
        <dbReference type="ChEBI" id="CHEBI:15377"/>
        <dbReference type="ChEBI" id="CHEBI:15378"/>
        <dbReference type="ChEBI" id="CHEBI:28938"/>
        <dbReference type="ChEBI" id="CHEBI:74411"/>
        <dbReference type="ChEBI" id="CHEBI:82852"/>
        <dbReference type="EC" id="3.5.4.37"/>
    </reaction>
</comment>
<comment type="cofactor">
    <cofactor evidence="2">
        <name>1D-myo-inositol hexakisphosphate</name>
        <dbReference type="ChEBI" id="CHEBI:58130"/>
    </cofactor>
    <text evidence="2">Binds 1 myo-inositol hexakisphosphate (IP6) per subunit.</text>
</comment>
<comment type="subunit">
    <text evidence="2">Homodimer. Homodimerization is essential for its catalytic activity. Can form heterodimers with isoform 5 of ADAR/ADAR1.</text>
</comment>
<comment type="subcellular location">
    <subcellularLocation>
        <location evidence="2">Nucleus</location>
    </subcellularLocation>
    <subcellularLocation>
        <location evidence="2">Nucleus</location>
        <location evidence="2">Nucleolus</location>
    </subcellularLocation>
    <text evidence="2">Shuttles between nucleoli and the nucleoplasm.</text>
</comment>
<comment type="tissue specificity">
    <text>Brain and peripheral tissues.</text>
</comment>
<feature type="chain" id="PRO_0000171781" description="Double-stranded RNA-specific editase 1">
    <location>
        <begin position="1"/>
        <end position="711"/>
    </location>
</feature>
<feature type="domain" description="DRBM 1" evidence="4">
    <location>
        <begin position="78"/>
        <end position="144"/>
    </location>
</feature>
<feature type="domain" description="DRBM 2" evidence="4">
    <location>
        <begin position="231"/>
        <end position="298"/>
    </location>
</feature>
<feature type="domain" description="A to I editase" evidence="3">
    <location>
        <begin position="370"/>
        <end position="707"/>
    </location>
</feature>
<feature type="region of interest" description="Disordered" evidence="5">
    <location>
        <begin position="1"/>
        <end position="79"/>
    </location>
</feature>
<feature type="region of interest" description="Interaction with substrate RNA" evidence="6 8">
    <location>
        <begin position="83"/>
        <end position="88"/>
    </location>
</feature>
<feature type="region of interest" description="Interaction with substrate RNA" evidence="6 8">
    <location>
        <begin position="104"/>
        <end position="105"/>
    </location>
</feature>
<feature type="region of interest" description="Disordered" evidence="5">
    <location>
        <begin position="176"/>
        <end position="220"/>
    </location>
</feature>
<feature type="region of interest" description="Interaction with substrate RNA" evidence="6 8">
    <location>
        <begin position="237"/>
        <end position="242"/>
    </location>
</feature>
<feature type="region of interest" description="Interaction with substrate RNA" evidence="6 8">
    <location>
        <position position="259"/>
    </location>
</feature>
<feature type="compositionally biased region" description="Basic residues" evidence="5">
    <location>
        <begin position="63"/>
        <end position="73"/>
    </location>
</feature>
<feature type="compositionally biased region" description="Low complexity" evidence="5">
    <location>
        <begin position="192"/>
        <end position="213"/>
    </location>
</feature>
<feature type="active site" description="Proton donor" evidence="3">
    <location>
        <position position="396"/>
    </location>
</feature>
<feature type="binding site" evidence="3">
    <location>
        <position position="394"/>
    </location>
    <ligand>
        <name>Zn(2+)</name>
        <dbReference type="ChEBI" id="CHEBI:29105"/>
    </ligand>
</feature>
<feature type="binding site" evidence="2">
    <location>
        <position position="400"/>
    </location>
    <ligand>
        <name>1D-myo-inositol hexakisphosphate</name>
        <dbReference type="ChEBI" id="CHEBI:58130"/>
    </ligand>
</feature>
<feature type="binding site" evidence="2">
    <location>
        <position position="401"/>
    </location>
    <ligand>
        <name>1D-myo-inositol hexakisphosphate</name>
        <dbReference type="ChEBI" id="CHEBI:58130"/>
    </ligand>
</feature>
<feature type="binding site" evidence="3">
    <location>
        <position position="451"/>
    </location>
    <ligand>
        <name>Zn(2+)</name>
        <dbReference type="ChEBI" id="CHEBI:29105"/>
    </ligand>
</feature>
<feature type="binding site" evidence="3">
    <location>
        <position position="526"/>
    </location>
    <ligand>
        <name>Zn(2+)</name>
        <dbReference type="ChEBI" id="CHEBI:29105"/>
    </ligand>
</feature>
<feature type="binding site" evidence="2">
    <location>
        <position position="529"/>
    </location>
    <ligand>
        <name>1D-myo-inositol hexakisphosphate</name>
        <dbReference type="ChEBI" id="CHEBI:58130"/>
    </ligand>
</feature>
<feature type="binding site" evidence="2">
    <location>
        <position position="532"/>
    </location>
    <ligand>
        <name>1D-myo-inositol hexakisphosphate</name>
        <dbReference type="ChEBI" id="CHEBI:58130"/>
    </ligand>
</feature>
<feature type="binding site" evidence="2">
    <location>
        <position position="639"/>
    </location>
    <ligand>
        <name>1D-myo-inositol hexakisphosphate</name>
        <dbReference type="ChEBI" id="CHEBI:58130"/>
    </ligand>
</feature>
<feature type="binding site" evidence="2">
    <location>
        <position position="672"/>
    </location>
    <ligand>
        <name>1D-myo-inositol hexakisphosphate</name>
        <dbReference type="ChEBI" id="CHEBI:58130"/>
    </ligand>
</feature>
<feature type="binding site" evidence="2">
    <location>
        <position position="682"/>
    </location>
    <ligand>
        <name>1D-myo-inositol hexakisphosphate</name>
        <dbReference type="ChEBI" id="CHEBI:58130"/>
    </ligand>
</feature>
<feature type="binding site" evidence="2">
    <location>
        <position position="700"/>
    </location>
    <ligand>
        <name>1D-myo-inositol hexakisphosphate</name>
        <dbReference type="ChEBI" id="CHEBI:58130"/>
    </ligand>
</feature>
<feature type="modified residue" description="Phosphoserine" evidence="2">
    <location>
        <position position="149"/>
    </location>
</feature>
<feature type="mutagenesis site" description="Strongly reduced RNA editing activity." evidence="8">
    <original>M</original>
    <variation>A</variation>
    <location>
        <position position="84"/>
    </location>
</feature>
<feature type="mutagenesis site" description="Strongly reduced RNA editing activity." evidence="8">
    <original>VH</original>
    <variation>AA</variation>
    <location>
        <begin position="104"/>
        <end position="105"/>
    </location>
</feature>
<feature type="mutagenesis site" description="Reduced RNA editing activity; when associated with A-281." evidence="6">
    <original>K</original>
    <variation>A</variation>
    <location>
        <position position="128"/>
    </location>
</feature>
<feature type="mutagenesis site" description="Strongly reduced RNA editing activity." evidence="8">
    <original>M</original>
    <variation>A</variation>
    <location>
        <position position="238"/>
    </location>
</feature>
<feature type="mutagenesis site" description="Abolishes RNA editing activity." evidence="8">
    <original>SH</original>
    <variation>AA</variation>
    <location>
        <begin position="258"/>
        <end position="259"/>
    </location>
</feature>
<feature type="mutagenesis site" description="Reduced RNA editing activity; when associated with A-128." evidence="6">
    <original>K</original>
    <variation>A</variation>
    <location>
        <position position="281"/>
    </location>
</feature>
<feature type="strand" evidence="9">
    <location>
        <begin position="76"/>
        <end position="79"/>
    </location>
</feature>
<feature type="helix" evidence="9">
    <location>
        <begin position="80"/>
        <end position="89"/>
    </location>
</feature>
<feature type="strand" evidence="9">
    <location>
        <begin position="94"/>
        <end position="101"/>
    </location>
</feature>
<feature type="strand" evidence="9">
    <location>
        <begin position="103"/>
        <end position="106"/>
    </location>
</feature>
<feature type="strand" evidence="9">
    <location>
        <begin position="108"/>
        <end position="126"/>
    </location>
</feature>
<feature type="helix" evidence="9">
    <location>
        <begin position="127"/>
        <end position="143"/>
    </location>
</feature>
<feature type="strand" evidence="11">
    <location>
        <begin position="183"/>
        <end position="186"/>
    </location>
</feature>
<feature type="strand" evidence="11">
    <location>
        <begin position="193"/>
        <end position="195"/>
    </location>
</feature>
<feature type="strand" evidence="11">
    <location>
        <begin position="197"/>
        <end position="201"/>
    </location>
</feature>
<feature type="strand" evidence="11">
    <location>
        <begin position="217"/>
        <end position="219"/>
    </location>
</feature>
<feature type="strand" evidence="11">
    <location>
        <begin position="221"/>
        <end position="224"/>
    </location>
</feature>
<feature type="helix" evidence="10">
    <location>
        <begin position="236"/>
        <end position="243"/>
    </location>
</feature>
<feature type="strand" evidence="10">
    <location>
        <begin position="248"/>
        <end position="253"/>
    </location>
</feature>
<feature type="turn" evidence="10">
    <location>
        <begin position="258"/>
        <end position="260"/>
    </location>
</feature>
<feature type="strand" evidence="10">
    <location>
        <begin position="263"/>
        <end position="268"/>
    </location>
</feature>
<feature type="strand" evidence="10">
    <location>
        <begin position="273"/>
        <end position="280"/>
    </location>
</feature>
<feature type="helix" evidence="10">
    <location>
        <begin position="281"/>
        <end position="299"/>
    </location>
</feature>
<keyword id="KW-0002">3D-structure</keyword>
<keyword id="KW-0378">Hydrolase</keyword>
<keyword id="KW-0479">Metal-binding</keyword>
<keyword id="KW-0507">mRNA processing</keyword>
<keyword id="KW-0539">Nucleus</keyword>
<keyword id="KW-0597">Phosphoprotein</keyword>
<keyword id="KW-1185">Reference proteome</keyword>
<keyword id="KW-0677">Repeat</keyword>
<keyword id="KW-0694">RNA-binding</keyword>
<keyword id="KW-0862">Zinc</keyword>